<protein>
    <recommendedName>
        <fullName evidence="1">Glycine cleavage system H protein</fullName>
    </recommendedName>
</protein>
<accession>A1BE02</accession>
<gene>
    <name evidence="1" type="primary">gcvH</name>
    <name type="ordered locus">Cpha266_0573</name>
</gene>
<sequence>MNIPEDLRYTKDHEWVKLLDDGSTALAGITDFAQSELGDIVFVELKAPGTKLKAHEVFGTVEAVKTVADLFAPIAGELVGINEALDAAEVVNTDPYGEGWLVKIKVDDAKAVEELLDAASYRQLIGA</sequence>
<proteinExistence type="inferred from homology"/>
<dbReference type="EMBL" id="CP000492">
    <property type="protein sequence ID" value="ABL64629.1"/>
    <property type="molecule type" value="Genomic_DNA"/>
</dbReference>
<dbReference type="RefSeq" id="WP_011744462.1">
    <property type="nucleotide sequence ID" value="NC_008639.1"/>
</dbReference>
<dbReference type="SMR" id="A1BE02"/>
<dbReference type="STRING" id="290317.Cpha266_0573"/>
<dbReference type="KEGG" id="cph:Cpha266_0573"/>
<dbReference type="eggNOG" id="COG0509">
    <property type="taxonomic scope" value="Bacteria"/>
</dbReference>
<dbReference type="HOGENOM" id="CLU_097408_2_2_10"/>
<dbReference type="OrthoDB" id="9796712at2"/>
<dbReference type="Proteomes" id="UP000008701">
    <property type="component" value="Chromosome"/>
</dbReference>
<dbReference type="GO" id="GO:0005737">
    <property type="term" value="C:cytoplasm"/>
    <property type="evidence" value="ECO:0007669"/>
    <property type="project" value="TreeGrafter"/>
</dbReference>
<dbReference type="GO" id="GO:0005960">
    <property type="term" value="C:glycine cleavage complex"/>
    <property type="evidence" value="ECO:0007669"/>
    <property type="project" value="InterPro"/>
</dbReference>
<dbReference type="GO" id="GO:0019464">
    <property type="term" value="P:glycine decarboxylation via glycine cleavage system"/>
    <property type="evidence" value="ECO:0007669"/>
    <property type="project" value="UniProtKB-UniRule"/>
</dbReference>
<dbReference type="CDD" id="cd06848">
    <property type="entry name" value="GCS_H"/>
    <property type="match status" value="1"/>
</dbReference>
<dbReference type="Gene3D" id="2.40.50.100">
    <property type="match status" value="1"/>
</dbReference>
<dbReference type="HAMAP" id="MF_00272">
    <property type="entry name" value="GcvH"/>
    <property type="match status" value="1"/>
</dbReference>
<dbReference type="InterPro" id="IPR003016">
    <property type="entry name" value="2-oxoA_DH_lipoyl-BS"/>
</dbReference>
<dbReference type="InterPro" id="IPR000089">
    <property type="entry name" value="Biotin_lipoyl"/>
</dbReference>
<dbReference type="InterPro" id="IPR002930">
    <property type="entry name" value="GCV_H"/>
</dbReference>
<dbReference type="InterPro" id="IPR033753">
    <property type="entry name" value="GCV_H/Fam206"/>
</dbReference>
<dbReference type="InterPro" id="IPR017453">
    <property type="entry name" value="GCV_H_sub"/>
</dbReference>
<dbReference type="InterPro" id="IPR011053">
    <property type="entry name" value="Single_hybrid_motif"/>
</dbReference>
<dbReference type="NCBIfam" id="TIGR00527">
    <property type="entry name" value="gcvH"/>
    <property type="match status" value="1"/>
</dbReference>
<dbReference type="NCBIfam" id="NF002270">
    <property type="entry name" value="PRK01202.1"/>
    <property type="match status" value="1"/>
</dbReference>
<dbReference type="PANTHER" id="PTHR11715">
    <property type="entry name" value="GLYCINE CLEAVAGE SYSTEM H PROTEIN"/>
    <property type="match status" value="1"/>
</dbReference>
<dbReference type="PANTHER" id="PTHR11715:SF3">
    <property type="entry name" value="GLYCINE CLEAVAGE SYSTEM H PROTEIN-RELATED"/>
    <property type="match status" value="1"/>
</dbReference>
<dbReference type="Pfam" id="PF01597">
    <property type="entry name" value="GCV_H"/>
    <property type="match status" value="1"/>
</dbReference>
<dbReference type="SUPFAM" id="SSF51230">
    <property type="entry name" value="Single hybrid motif"/>
    <property type="match status" value="1"/>
</dbReference>
<dbReference type="PROSITE" id="PS50968">
    <property type="entry name" value="BIOTINYL_LIPOYL"/>
    <property type="match status" value="1"/>
</dbReference>
<dbReference type="PROSITE" id="PS00189">
    <property type="entry name" value="LIPOYL"/>
    <property type="match status" value="1"/>
</dbReference>
<feature type="chain" id="PRO_0000302365" description="Glycine cleavage system H protein">
    <location>
        <begin position="1"/>
        <end position="127"/>
    </location>
</feature>
<feature type="domain" description="Lipoyl-binding" evidence="2">
    <location>
        <begin position="24"/>
        <end position="105"/>
    </location>
</feature>
<feature type="modified residue" description="N6-lipoyllysine" evidence="1">
    <location>
        <position position="65"/>
    </location>
</feature>
<evidence type="ECO:0000255" key="1">
    <source>
        <dbReference type="HAMAP-Rule" id="MF_00272"/>
    </source>
</evidence>
<evidence type="ECO:0000255" key="2">
    <source>
        <dbReference type="PROSITE-ProRule" id="PRU01066"/>
    </source>
</evidence>
<reference key="1">
    <citation type="submission" date="2006-12" db="EMBL/GenBank/DDBJ databases">
        <title>Complete sequence of Chlorobium phaeobacteroides DSM 266.</title>
        <authorList>
            <consortium name="US DOE Joint Genome Institute"/>
            <person name="Copeland A."/>
            <person name="Lucas S."/>
            <person name="Lapidus A."/>
            <person name="Barry K."/>
            <person name="Detter J.C."/>
            <person name="Glavina del Rio T."/>
            <person name="Hammon N."/>
            <person name="Israni S."/>
            <person name="Pitluck S."/>
            <person name="Goltsman E."/>
            <person name="Schmutz J."/>
            <person name="Larimer F."/>
            <person name="Land M."/>
            <person name="Hauser L."/>
            <person name="Mikhailova N."/>
            <person name="Li T."/>
            <person name="Overmann J."/>
            <person name="Bryant D.A."/>
            <person name="Richardson P."/>
        </authorList>
    </citation>
    <scope>NUCLEOTIDE SEQUENCE [LARGE SCALE GENOMIC DNA]</scope>
    <source>
        <strain>DSM 266 / SMG 266 / 2430</strain>
    </source>
</reference>
<comment type="function">
    <text evidence="1">The glycine cleavage system catalyzes the degradation of glycine. The H protein shuttles the methylamine group of glycine from the P protein to the T protein.</text>
</comment>
<comment type="cofactor">
    <cofactor evidence="1">
        <name>(R)-lipoate</name>
        <dbReference type="ChEBI" id="CHEBI:83088"/>
    </cofactor>
    <text evidence="1">Binds 1 lipoyl cofactor covalently.</text>
</comment>
<comment type="subunit">
    <text evidence="1">The glycine cleavage system is composed of four proteins: P, T, L and H.</text>
</comment>
<comment type="similarity">
    <text evidence="1">Belongs to the GcvH family.</text>
</comment>
<organism>
    <name type="scientific">Chlorobium phaeobacteroides (strain DSM 266 / SMG 266 / 2430)</name>
    <dbReference type="NCBI Taxonomy" id="290317"/>
    <lineage>
        <taxon>Bacteria</taxon>
        <taxon>Pseudomonadati</taxon>
        <taxon>Chlorobiota</taxon>
        <taxon>Chlorobiia</taxon>
        <taxon>Chlorobiales</taxon>
        <taxon>Chlorobiaceae</taxon>
        <taxon>Chlorobium/Pelodictyon group</taxon>
        <taxon>Chlorobium</taxon>
    </lineage>
</organism>
<name>GCSH_CHLPD</name>
<keyword id="KW-0450">Lipoyl</keyword>
<keyword id="KW-1185">Reference proteome</keyword>